<dbReference type="EMBL" id="M31364">
    <property type="protein sequence ID" value="AAA33607.1"/>
    <property type="molecule type" value="Genomic_DNA"/>
</dbReference>
<dbReference type="EMBL" id="CM002242">
    <property type="protein sequence ID" value="ESA41860.1"/>
    <property type="molecule type" value="Genomic_DNA"/>
</dbReference>
<dbReference type="EMBL" id="CM002242">
    <property type="protein sequence ID" value="ESA41861.1"/>
    <property type="molecule type" value="Genomic_DNA"/>
</dbReference>
<dbReference type="PIR" id="JQ0116">
    <property type="entry name" value="JQ0116"/>
</dbReference>
<dbReference type="RefSeq" id="XP_011395302.1">
    <property type="nucleotide sequence ID" value="XM_011397000.1"/>
</dbReference>
<dbReference type="RefSeq" id="XP_011395303.1">
    <property type="nucleotide sequence ID" value="XM_011397001.1"/>
</dbReference>
<dbReference type="SMR" id="P15710"/>
<dbReference type="FunCoup" id="P15710">
    <property type="interactions" value="916"/>
</dbReference>
<dbReference type="STRING" id="367110.P15710"/>
<dbReference type="TCDB" id="2.A.20.2.1">
    <property type="family name" value="the inorganic phosphate transporter (pit) family"/>
</dbReference>
<dbReference type="PaxDb" id="5141-EFNCRP00000009174"/>
<dbReference type="EnsemblFungi" id="ESA41860">
    <property type="protein sequence ID" value="ESA41860"/>
    <property type="gene ID" value="NCU09564"/>
</dbReference>
<dbReference type="EnsemblFungi" id="ESA41861">
    <property type="protein sequence ID" value="ESA41861"/>
    <property type="gene ID" value="NCU09564"/>
</dbReference>
<dbReference type="GeneID" id="3875636"/>
<dbReference type="KEGG" id="ncr:NCU09564"/>
<dbReference type="VEuPathDB" id="FungiDB:NCU09564"/>
<dbReference type="HOGENOM" id="CLU_015355_3_0_1"/>
<dbReference type="InParanoid" id="P15710"/>
<dbReference type="OMA" id="MQAFCIA"/>
<dbReference type="OrthoDB" id="260807at2759"/>
<dbReference type="Proteomes" id="UP000001805">
    <property type="component" value="Chromosome 7, Linkage Group VII"/>
</dbReference>
<dbReference type="GO" id="GO:0005886">
    <property type="term" value="C:plasma membrane"/>
    <property type="evidence" value="ECO:0007669"/>
    <property type="project" value="UniProtKB-SubCell"/>
</dbReference>
<dbReference type="GO" id="GO:0005436">
    <property type="term" value="F:sodium:phosphate symporter activity"/>
    <property type="evidence" value="ECO:0000318"/>
    <property type="project" value="GO_Central"/>
</dbReference>
<dbReference type="GO" id="GO:0035435">
    <property type="term" value="P:phosphate ion transmembrane transport"/>
    <property type="evidence" value="ECO:0000318"/>
    <property type="project" value="GO_Central"/>
</dbReference>
<dbReference type="InterPro" id="IPR001204">
    <property type="entry name" value="Phos_transporter"/>
</dbReference>
<dbReference type="PANTHER" id="PTHR11101">
    <property type="entry name" value="PHOSPHATE TRANSPORTER"/>
    <property type="match status" value="1"/>
</dbReference>
<dbReference type="PANTHER" id="PTHR11101:SF80">
    <property type="entry name" value="PHOSPHATE TRANSPORTER"/>
    <property type="match status" value="1"/>
</dbReference>
<dbReference type="Pfam" id="PF01384">
    <property type="entry name" value="PHO4"/>
    <property type="match status" value="1"/>
</dbReference>
<reference key="1">
    <citation type="journal article" date="1989" name="Gene">
        <title>Nucleotide sequence of pho-4+, encoding a phosphate-repressible phosphate permease of Neurospora crassa.</title>
        <authorList>
            <person name="Mann B.J."/>
            <person name="Bowman B.J."/>
            <person name="Grotelueschen J."/>
            <person name="Metzenberg R.L."/>
        </authorList>
    </citation>
    <scope>NUCLEOTIDE SEQUENCE [GENOMIC DNA]</scope>
    <source>
        <strain>ORSa / FGSC 2490</strain>
    </source>
</reference>
<reference key="2">
    <citation type="journal article" date="2003" name="Nature">
        <title>The genome sequence of the filamentous fungus Neurospora crassa.</title>
        <authorList>
            <person name="Galagan J.E."/>
            <person name="Calvo S.E."/>
            <person name="Borkovich K.A."/>
            <person name="Selker E.U."/>
            <person name="Read N.D."/>
            <person name="Jaffe D.B."/>
            <person name="FitzHugh W."/>
            <person name="Ma L.-J."/>
            <person name="Smirnov S."/>
            <person name="Purcell S."/>
            <person name="Rehman B."/>
            <person name="Elkins T."/>
            <person name="Engels R."/>
            <person name="Wang S."/>
            <person name="Nielsen C.B."/>
            <person name="Butler J."/>
            <person name="Endrizzi M."/>
            <person name="Qui D."/>
            <person name="Ianakiev P."/>
            <person name="Bell-Pedersen D."/>
            <person name="Nelson M.A."/>
            <person name="Werner-Washburne M."/>
            <person name="Selitrennikoff C.P."/>
            <person name="Kinsey J.A."/>
            <person name="Braun E.L."/>
            <person name="Zelter A."/>
            <person name="Schulte U."/>
            <person name="Kothe G.O."/>
            <person name="Jedd G."/>
            <person name="Mewes H.-W."/>
            <person name="Staben C."/>
            <person name="Marcotte E."/>
            <person name="Greenberg D."/>
            <person name="Roy A."/>
            <person name="Foley K."/>
            <person name="Naylor J."/>
            <person name="Stange-Thomann N."/>
            <person name="Barrett R."/>
            <person name="Gnerre S."/>
            <person name="Kamal M."/>
            <person name="Kamvysselis M."/>
            <person name="Mauceli E.W."/>
            <person name="Bielke C."/>
            <person name="Rudd S."/>
            <person name="Frishman D."/>
            <person name="Krystofova S."/>
            <person name="Rasmussen C."/>
            <person name="Metzenberg R.L."/>
            <person name="Perkins D.D."/>
            <person name="Kroken S."/>
            <person name="Cogoni C."/>
            <person name="Macino G."/>
            <person name="Catcheside D.E.A."/>
            <person name="Li W."/>
            <person name="Pratt R.J."/>
            <person name="Osmani S.A."/>
            <person name="DeSouza C.P.C."/>
            <person name="Glass N.L."/>
            <person name="Orbach M.J."/>
            <person name="Berglund J.A."/>
            <person name="Voelker R."/>
            <person name="Yarden O."/>
            <person name="Plamann M."/>
            <person name="Seiler S."/>
            <person name="Dunlap J.C."/>
            <person name="Radford A."/>
            <person name="Aramayo R."/>
            <person name="Natvig D.O."/>
            <person name="Alex L.A."/>
            <person name="Mannhaupt G."/>
            <person name="Ebbole D.J."/>
            <person name="Freitag M."/>
            <person name="Paulsen I."/>
            <person name="Sachs M.S."/>
            <person name="Lander E.S."/>
            <person name="Nusbaum C."/>
            <person name="Birren B.W."/>
        </authorList>
    </citation>
    <scope>NUCLEOTIDE SEQUENCE [LARGE SCALE GENOMIC DNA]</scope>
    <source>
        <strain>ATCC 24698 / 74-OR23-1A / CBS 708.71 / DSM 1257 / FGSC 987</strain>
    </source>
</reference>
<reference key="3">
    <citation type="journal article" date="1983" name="J. Bacteriol.">
        <title>Vanadate-resistant mutants of Neurospora crassa are deficient in a high-affinity phosphate transport system.</title>
        <authorList>
            <person name="Bowman B.J."/>
            <person name="Allen K.E."/>
            <person name="Slayman C.W."/>
        </authorList>
    </citation>
    <scope>DISRUPTION PHENOTYPE</scope>
    <scope>FUNCTION</scope>
</reference>
<reference key="4">
    <citation type="journal article" date="1995" name="Gene">
        <title>A phosphate-repressible, high-affinity phosphate permease is encoded by the pho-5+ gene of Neurospora crassa.</title>
        <authorList>
            <person name="Versaw W.K."/>
        </authorList>
    </citation>
    <scope>DISRUPTION PHENOTYPE</scope>
    <scope>INDUCTION</scope>
    <source>
        <strain>59-29</strain>
    </source>
</reference>
<reference key="5">
    <citation type="journal article" date="1995" name="Proc. Natl. Acad. Sci. U.S.A.">
        <title>Repressible cation-phosphate symporters in Neurospora crassa.</title>
        <authorList>
            <person name="Versaw W.K."/>
            <person name="Metzenberg R.L."/>
        </authorList>
    </citation>
    <scope>FUNCTION</scope>
    <scope>BIOPHYSICOCHEMICAL PROPERTIES</scope>
    <scope>ACTIVITY REGULATION</scope>
</reference>
<organism>
    <name type="scientific">Neurospora crassa (strain ATCC 24698 / 74-OR23-1A / CBS 708.71 / DSM 1257 / FGSC 987)</name>
    <dbReference type="NCBI Taxonomy" id="367110"/>
    <lineage>
        <taxon>Eukaryota</taxon>
        <taxon>Fungi</taxon>
        <taxon>Dikarya</taxon>
        <taxon>Ascomycota</taxon>
        <taxon>Pezizomycotina</taxon>
        <taxon>Sordariomycetes</taxon>
        <taxon>Sordariomycetidae</taxon>
        <taxon>Sordariales</taxon>
        <taxon>Sordariaceae</taxon>
        <taxon>Neurospora</taxon>
    </lineage>
</organism>
<sequence length="590" mass="63201">MVLHQFDYLLAIGTIFAALDAWNIGANDVANSWATSVAARSVTYLQAMILGSIMEFAGSVGVGARVADTIRTKVVDTTLFADDPALLMLGMVCAVVASSIYLTMATRFGLPVSTTHSIMGGVIGMGIAAVGADGVQWVGSSINDGVVSVFLAWVIAPGLAGAFASIIFLVTKYGVLLRSNPVYKAFVMVPIYFGITAALLCMLLLWKGGSYKVTLTNPEIAGTIIGVGAAWALLVTIFLMPWLYRIVILEDWQLRFWHIPLGPLLLRRGEVPPPPADGSGVVQDFYAGRLTKEQLAARRAAQNGDSEMAAGAVTSSTSNPSAPTDGEKGATITKDDSSYSHDHSEPAQAAQPQIKTMVGPRPAGPWHSGAVLFWYVKWALFRGVDQDVLSSQQEKSVISSDVEELHAHATHYDNKTEYMYSFLQIMTAAAASFTHGANDIANAIGPYATVFQLWKDGALPEKGKADVPVWILVFGASCLVIGLWTYGYNIMRNLGNRITLQSPSRGFSMELGSAVTVILATRLKLPVSTTQCITGATVGVGLCSGTWRTINWRLVAWIYMGWFITLPVAGIISGCLMGIIINAPRWGYSG</sequence>
<feature type="chain" id="PRO_0000080780" description="Phosphate-repressible phosphate permease pho-4">
    <location>
        <begin position="1"/>
        <end position="590"/>
    </location>
</feature>
<feature type="transmembrane region" description="Helical" evidence="1">
    <location>
        <begin position="6"/>
        <end position="26"/>
    </location>
</feature>
<feature type="transmembrane region" description="Helical" evidence="1">
    <location>
        <begin position="44"/>
        <end position="64"/>
    </location>
</feature>
<feature type="transmembrane region" description="Helical" evidence="1">
    <location>
        <begin position="85"/>
        <end position="105"/>
    </location>
</feature>
<feature type="transmembrane region" description="Helical" evidence="1">
    <location>
        <begin position="118"/>
        <end position="138"/>
    </location>
</feature>
<feature type="transmembrane region" description="Helical" evidence="1">
    <location>
        <begin position="149"/>
        <end position="169"/>
    </location>
</feature>
<feature type="transmembrane region" description="Helical" evidence="1">
    <location>
        <begin position="186"/>
        <end position="206"/>
    </location>
</feature>
<feature type="transmembrane region" description="Helical" evidence="1">
    <location>
        <begin position="220"/>
        <end position="240"/>
    </location>
</feature>
<feature type="transmembrane region" description="Helical" evidence="1">
    <location>
        <begin position="246"/>
        <end position="266"/>
    </location>
</feature>
<feature type="topological domain" description="Cytoplasmic" evidence="1">
    <location>
        <begin position="267"/>
        <end position="466"/>
    </location>
</feature>
<feature type="transmembrane region" description="Helical" evidence="1">
    <location>
        <begin position="467"/>
        <end position="487"/>
    </location>
</feature>
<feature type="transmembrane region" description="Helical" evidence="1">
    <location>
        <begin position="506"/>
        <end position="525"/>
    </location>
</feature>
<feature type="transmembrane region" description="Helical" evidence="1">
    <location>
        <begin position="527"/>
        <end position="547"/>
    </location>
</feature>
<feature type="transmembrane region" description="Helical" evidence="1">
    <location>
        <begin position="561"/>
        <end position="581"/>
    </location>
</feature>
<feature type="region of interest" description="Disordered" evidence="2">
    <location>
        <begin position="297"/>
        <end position="361"/>
    </location>
</feature>
<feature type="compositionally biased region" description="Polar residues" evidence="2">
    <location>
        <begin position="313"/>
        <end position="322"/>
    </location>
</feature>
<feature type="compositionally biased region" description="Basic and acidic residues" evidence="2">
    <location>
        <begin position="325"/>
        <end position="345"/>
    </location>
</feature>
<comment type="function">
    <text evidence="3 4">High-affinity transporter for external inorganic phosphate. Acts probably as a sodium-phosphate symporter. Component of the high affinity phosphate transport system II (ptsII) necessary for scavenging phosphorus from the environment under conditions of limiting phosphorus.</text>
</comment>
<comment type="activity regulation">
    <text evidence="4">Phosphate transport activity is competitively inhibited by vanadate and arsenate.</text>
</comment>
<comment type="biophysicochemical properties">
    <kinetics>
        <KM evidence="4">2.56 uM for phosphate</KM>
        <Vmax evidence="4">7.0 nmol/min/mg enzyme</Vmax>
    </kinetics>
</comment>
<comment type="subcellular location">
    <subcellularLocation>
        <location evidence="9">Cell membrane</location>
        <topology evidence="1">Multi-pass membrane protein</topology>
    </subcellularLocation>
</comment>
<comment type="induction">
    <text evidence="5">Transcription is controlled by the phosphorus-acquisition regulatory system.</text>
</comment>
<comment type="disruption phenotype">
    <text evidence="3 5">Impairs growth at low phosphate conditions when pho-5 is also absent. Prevents vanadate uptake.</text>
</comment>
<comment type="similarity">
    <text evidence="9">Belongs to the inorganic phosphate transporter (PiT) (TC 2.A.20) family.</text>
</comment>
<evidence type="ECO:0000255" key="1"/>
<evidence type="ECO:0000256" key="2">
    <source>
        <dbReference type="SAM" id="MobiDB-lite"/>
    </source>
</evidence>
<evidence type="ECO:0000269" key="3">
    <source>
    </source>
</evidence>
<evidence type="ECO:0000269" key="4">
    <source>
    </source>
</evidence>
<evidence type="ECO:0000269" key="5">
    <source>
    </source>
</evidence>
<evidence type="ECO:0000303" key="6">
    <source>
    </source>
</evidence>
<evidence type="ECO:0000303" key="7">
    <source>
    </source>
</evidence>
<evidence type="ECO:0000303" key="8">
    <source>
    </source>
</evidence>
<evidence type="ECO:0000305" key="9"/>
<proteinExistence type="evidence at protein level"/>
<keyword id="KW-1003">Cell membrane</keyword>
<keyword id="KW-0472">Membrane</keyword>
<keyword id="KW-0592">Phosphate transport</keyword>
<keyword id="KW-1185">Reference proteome</keyword>
<keyword id="KW-0769">Symport</keyword>
<keyword id="KW-0812">Transmembrane</keyword>
<keyword id="KW-1133">Transmembrane helix</keyword>
<keyword id="KW-0813">Transport</keyword>
<protein>
    <recommendedName>
        <fullName evidence="7">Phosphate-repressible phosphate permease pho-4</fullName>
    </recommendedName>
</protein>
<accession>P15710</accession>
<accession>Q7RV96</accession>
<accession>V5IMB0</accession>
<gene>
    <name evidence="7" type="primary">pho-4</name>
    <name evidence="8" type="synonym">van</name>
    <name evidence="6" type="ORF">NCU09564</name>
</gene>
<name>PHO4_NEUCR</name>